<name>E2F1_RAT</name>
<sequence>MAVAPAGGQHAPALEALLGAGALRLLDSSQIVIISTAPDVGAPQVPTGPAAPPAGPRDPDVLLFATPQAPRPAPSAPRPALGRPPVKRRLDLETDHQYLAGSSGPFRGRGRHPGKGVKSPGEKSRYETSLNLTTKRFLELLSHSADGVVDLNWAAEVLKVQKRRIYDITNVLEGIQLIAKKSKNHIQWLGSRTMVGIGQRLEGLTQDLQQLQESEQQLDHLMHICTTQLQLLSEDSDIQRLAYVTCQDLRSIADPAEQMVIVIKAPPETQLQAVDSAETFQISLKSKQGPIDVFLCPEESAEGISPGRTSYQETSGEDRNADSGTAGPPPSPPSTSPTLDPSQSLLGLEQEAVLPRIGNLRAPMEEDRLSPLVAADSLLEHVKEDFSGLLPGEFISLSPPHEAVDYHFGLEEGEGIRDLFDCDFGDLTPLDF</sequence>
<accession>O09139</accession>
<proteinExistence type="evidence at protein level"/>
<keyword id="KW-0007">Acetylation</keyword>
<keyword id="KW-0010">Activator</keyword>
<keyword id="KW-0238">DNA-binding</keyword>
<keyword id="KW-0488">Methylation</keyword>
<keyword id="KW-0539">Nucleus</keyword>
<keyword id="KW-0597">Phosphoprotein</keyword>
<keyword id="KW-1185">Reference proteome</keyword>
<keyword id="KW-0804">Transcription</keyword>
<keyword id="KW-0805">Transcription regulation</keyword>
<keyword id="KW-0832">Ubl conjugation</keyword>
<reference key="1">
    <citation type="journal article" date="1995" name="Biochem. Mol. Biol. Int.">
        <title>Synergistic gene expressions of cyclin E, cdk2, cdk5 and E2F-1 during the prolactin-induced G1/S transition in rat Nb2 pre-T lymphoma cells.</title>
        <authorList>
            <person name="Hosokawa Y."/>
            <person name="Yang M."/>
            <person name="Kaneko S."/>
            <person name="Tanaka M."/>
            <person name="Nakashima K."/>
        </authorList>
    </citation>
    <scope>NUCLEOTIDE SEQUENCE [MRNA]</scope>
</reference>
<reference key="2">
    <citation type="journal article" date="2010" name="Mol. Cell. Biol.">
        <title>Repression of transcriptional activity of C/EBPalpha by E2F-dimerization partner complexes.</title>
        <authorList>
            <person name="Zaragoza K."/>
            <person name="Begay V."/>
            <person name="Schuetz A."/>
            <person name="Heinemann U."/>
            <person name="Leutz A."/>
        </authorList>
    </citation>
    <scope>INTERACTION WITH CEBPA</scope>
</reference>
<dbReference type="EMBL" id="D63165">
    <property type="protein sequence ID" value="BAA09641.1"/>
    <property type="molecule type" value="mRNA"/>
</dbReference>
<dbReference type="RefSeq" id="NP_001094248.1">
    <property type="nucleotide sequence ID" value="NM_001100778.1"/>
</dbReference>
<dbReference type="SMR" id="O09139"/>
<dbReference type="FunCoup" id="O09139">
    <property type="interactions" value="859"/>
</dbReference>
<dbReference type="IntAct" id="O09139">
    <property type="interactions" value="1"/>
</dbReference>
<dbReference type="STRING" id="10116.ENSRNOP00000022428"/>
<dbReference type="PhosphoSitePlus" id="O09139"/>
<dbReference type="PaxDb" id="10116-ENSRNOP00000022428"/>
<dbReference type="GeneID" id="399489"/>
<dbReference type="KEGG" id="rno:399489"/>
<dbReference type="UCSC" id="RGD:728892">
    <property type="organism name" value="rat"/>
</dbReference>
<dbReference type="AGR" id="RGD:728892"/>
<dbReference type="CTD" id="1869"/>
<dbReference type="RGD" id="728892">
    <property type="gene designation" value="E2f1"/>
</dbReference>
<dbReference type="VEuPathDB" id="HostDB:ENSRNOG00000016708"/>
<dbReference type="eggNOG" id="KOG2577">
    <property type="taxonomic scope" value="Eukaryota"/>
</dbReference>
<dbReference type="HOGENOM" id="CLU_032091_0_1_1"/>
<dbReference type="InParanoid" id="O09139"/>
<dbReference type="OrthoDB" id="1743261at2759"/>
<dbReference type="Reactome" id="R-RNO-68911">
    <property type="pathway name" value="G2 Phase"/>
</dbReference>
<dbReference type="Reactome" id="R-RNO-69231">
    <property type="pathway name" value="Cyclin D associated events in G1"/>
</dbReference>
<dbReference type="PRO" id="PR:O09139"/>
<dbReference type="Proteomes" id="UP000002494">
    <property type="component" value="Chromosome 3"/>
</dbReference>
<dbReference type="Bgee" id="ENSRNOG00000016708">
    <property type="expression patterns" value="Expressed in frontal cortex and 18 other cell types or tissues"/>
</dbReference>
<dbReference type="ExpressionAtlas" id="O09139">
    <property type="expression patterns" value="baseline and differential"/>
</dbReference>
<dbReference type="GO" id="GO:0005813">
    <property type="term" value="C:centrosome"/>
    <property type="evidence" value="ECO:0007669"/>
    <property type="project" value="Ensembl"/>
</dbReference>
<dbReference type="GO" id="GO:0000785">
    <property type="term" value="C:chromatin"/>
    <property type="evidence" value="ECO:0000266"/>
    <property type="project" value="RGD"/>
</dbReference>
<dbReference type="GO" id="GO:0005737">
    <property type="term" value="C:cytoplasm"/>
    <property type="evidence" value="ECO:0000266"/>
    <property type="project" value="RGD"/>
</dbReference>
<dbReference type="GO" id="GO:0000228">
    <property type="term" value="C:nuclear chromosome"/>
    <property type="evidence" value="ECO:0000314"/>
    <property type="project" value="UniProtKB"/>
</dbReference>
<dbReference type="GO" id="GO:0005654">
    <property type="term" value="C:nucleoplasm"/>
    <property type="evidence" value="ECO:0007669"/>
    <property type="project" value="Ensembl"/>
</dbReference>
<dbReference type="GO" id="GO:0005634">
    <property type="term" value="C:nucleus"/>
    <property type="evidence" value="ECO:0000266"/>
    <property type="project" value="RGD"/>
</dbReference>
<dbReference type="GO" id="GO:0032991">
    <property type="term" value="C:protein-containing complex"/>
    <property type="evidence" value="ECO:0000266"/>
    <property type="project" value="RGD"/>
</dbReference>
<dbReference type="GO" id="GO:0035189">
    <property type="term" value="C:Rb-E2F complex"/>
    <property type="evidence" value="ECO:0000266"/>
    <property type="project" value="RGD"/>
</dbReference>
<dbReference type="GO" id="GO:0090575">
    <property type="term" value="C:RNA polymerase II transcription regulator complex"/>
    <property type="evidence" value="ECO:0000266"/>
    <property type="project" value="RGD"/>
</dbReference>
<dbReference type="GO" id="GO:0005667">
    <property type="term" value="C:transcription regulator complex"/>
    <property type="evidence" value="ECO:0000266"/>
    <property type="project" value="RGD"/>
</dbReference>
<dbReference type="GO" id="GO:0000987">
    <property type="term" value="F:cis-regulatory region sequence-specific DNA binding"/>
    <property type="evidence" value="ECO:0000266"/>
    <property type="project" value="RGD"/>
</dbReference>
<dbReference type="GO" id="GO:0003677">
    <property type="term" value="F:DNA binding"/>
    <property type="evidence" value="ECO:0000266"/>
    <property type="project" value="RGD"/>
</dbReference>
<dbReference type="GO" id="GO:0001216">
    <property type="term" value="F:DNA-binding transcription activator activity"/>
    <property type="evidence" value="ECO:0000250"/>
    <property type="project" value="UniProtKB"/>
</dbReference>
<dbReference type="GO" id="GO:0003700">
    <property type="term" value="F:DNA-binding transcription factor activity"/>
    <property type="evidence" value="ECO:0000266"/>
    <property type="project" value="RGD"/>
</dbReference>
<dbReference type="GO" id="GO:0000981">
    <property type="term" value="F:DNA-binding transcription factor activity, RNA polymerase II-specific"/>
    <property type="evidence" value="ECO:0000250"/>
    <property type="project" value="UniProtKB"/>
</dbReference>
<dbReference type="GO" id="GO:0140297">
    <property type="term" value="F:DNA-binding transcription factor binding"/>
    <property type="evidence" value="ECO:0000266"/>
    <property type="project" value="RGD"/>
</dbReference>
<dbReference type="GO" id="GO:0060090">
    <property type="term" value="F:molecular adaptor activity"/>
    <property type="evidence" value="ECO:0000266"/>
    <property type="project" value="RGD"/>
</dbReference>
<dbReference type="GO" id="GO:0046983">
    <property type="term" value="F:protein dimerization activity"/>
    <property type="evidence" value="ECO:0007669"/>
    <property type="project" value="InterPro"/>
</dbReference>
<dbReference type="GO" id="GO:0019901">
    <property type="term" value="F:protein kinase binding"/>
    <property type="evidence" value="ECO:0000353"/>
    <property type="project" value="RGD"/>
</dbReference>
<dbReference type="GO" id="GO:0000978">
    <property type="term" value="F:RNA polymerase II cis-regulatory region sequence-specific DNA binding"/>
    <property type="evidence" value="ECO:0000318"/>
    <property type="project" value="GO_Central"/>
</dbReference>
<dbReference type="GO" id="GO:0043565">
    <property type="term" value="F:sequence-specific DNA binding"/>
    <property type="evidence" value="ECO:0000314"/>
    <property type="project" value="RGD"/>
</dbReference>
<dbReference type="GO" id="GO:1990837">
    <property type="term" value="F:sequence-specific double-stranded DNA binding"/>
    <property type="evidence" value="ECO:0000266"/>
    <property type="project" value="RGD"/>
</dbReference>
<dbReference type="GO" id="GO:0000976">
    <property type="term" value="F:transcription cis-regulatory region binding"/>
    <property type="evidence" value="ECO:0000266"/>
    <property type="project" value="RGD"/>
</dbReference>
<dbReference type="GO" id="GO:0043276">
    <property type="term" value="P:anoikis"/>
    <property type="evidence" value="ECO:0000266"/>
    <property type="project" value="RGD"/>
</dbReference>
<dbReference type="GO" id="GO:0071398">
    <property type="term" value="P:cellular response to fatty acid"/>
    <property type="evidence" value="ECO:0000270"/>
    <property type="project" value="RGD"/>
</dbReference>
<dbReference type="GO" id="GO:0071456">
    <property type="term" value="P:cellular response to hypoxia"/>
    <property type="evidence" value="ECO:0000270"/>
    <property type="project" value="RGD"/>
</dbReference>
<dbReference type="GO" id="GO:1990090">
    <property type="term" value="P:cellular response to nerve growth factor stimulus"/>
    <property type="evidence" value="ECO:0000314"/>
    <property type="project" value="RGD"/>
</dbReference>
<dbReference type="GO" id="GO:0071466">
    <property type="term" value="P:cellular response to xenobiotic stimulus"/>
    <property type="evidence" value="ECO:0000266"/>
    <property type="project" value="RGD"/>
</dbReference>
<dbReference type="GO" id="GO:0000077">
    <property type="term" value="P:DNA damage checkpoint signaling"/>
    <property type="evidence" value="ECO:0000250"/>
    <property type="project" value="UniProtKB"/>
</dbReference>
<dbReference type="GO" id="GO:0006351">
    <property type="term" value="P:DNA-templated transcription"/>
    <property type="evidence" value="ECO:0000250"/>
    <property type="project" value="UniProtKB"/>
</dbReference>
<dbReference type="GO" id="GO:0030900">
    <property type="term" value="P:forebrain development"/>
    <property type="evidence" value="ECO:0000266"/>
    <property type="project" value="RGD"/>
</dbReference>
<dbReference type="GO" id="GO:0000082">
    <property type="term" value="P:G1/S transition of mitotic cell cycle"/>
    <property type="evidence" value="ECO:0000304"/>
    <property type="project" value="RGD"/>
</dbReference>
<dbReference type="GO" id="GO:0072332">
    <property type="term" value="P:intrinsic apoptotic signaling pathway by p53 class mediator"/>
    <property type="evidence" value="ECO:0000266"/>
    <property type="project" value="RGD"/>
</dbReference>
<dbReference type="GO" id="GO:0008630">
    <property type="term" value="P:intrinsic apoptotic signaling pathway in response to DNA damage"/>
    <property type="evidence" value="ECO:0000250"/>
    <property type="project" value="UniProtKB"/>
</dbReference>
<dbReference type="GO" id="GO:1990086">
    <property type="term" value="P:lens fiber cell apoptotic process"/>
    <property type="evidence" value="ECO:0000266"/>
    <property type="project" value="RGD"/>
</dbReference>
<dbReference type="GO" id="GO:0048255">
    <property type="term" value="P:mRNA stabilization"/>
    <property type="evidence" value="ECO:0000266"/>
    <property type="project" value="RGD"/>
</dbReference>
<dbReference type="GO" id="GO:0043392">
    <property type="term" value="P:negative regulation of DNA binding"/>
    <property type="evidence" value="ECO:0000250"/>
    <property type="project" value="UniProtKB"/>
</dbReference>
<dbReference type="GO" id="GO:0045892">
    <property type="term" value="P:negative regulation of DNA-templated transcription"/>
    <property type="evidence" value="ECO:0000250"/>
    <property type="project" value="UniProtKB"/>
</dbReference>
<dbReference type="GO" id="GO:0045599">
    <property type="term" value="P:negative regulation of fat cell differentiation"/>
    <property type="evidence" value="ECO:0000250"/>
    <property type="project" value="UniProtKB"/>
</dbReference>
<dbReference type="GO" id="GO:0070345">
    <property type="term" value="P:negative regulation of fat cell proliferation"/>
    <property type="evidence" value="ECO:0000250"/>
    <property type="project" value="UniProtKB"/>
</dbReference>
<dbReference type="GO" id="GO:0000122">
    <property type="term" value="P:negative regulation of transcription by RNA polymerase II"/>
    <property type="evidence" value="ECO:0000266"/>
    <property type="project" value="RGD"/>
</dbReference>
<dbReference type="GO" id="GO:0043065">
    <property type="term" value="P:positive regulation of apoptotic process"/>
    <property type="evidence" value="ECO:0000266"/>
    <property type="project" value="RGD"/>
</dbReference>
<dbReference type="GO" id="GO:0045893">
    <property type="term" value="P:positive regulation of DNA-templated transcription"/>
    <property type="evidence" value="ECO:0000266"/>
    <property type="project" value="RGD"/>
</dbReference>
<dbReference type="GO" id="GO:0048146">
    <property type="term" value="P:positive regulation of fibroblast proliferation"/>
    <property type="evidence" value="ECO:0000266"/>
    <property type="project" value="RGD"/>
</dbReference>
<dbReference type="GO" id="GO:0010628">
    <property type="term" value="P:positive regulation of gene expression"/>
    <property type="evidence" value="ECO:0000266"/>
    <property type="project" value="RGD"/>
</dbReference>
<dbReference type="GO" id="GO:0060252">
    <property type="term" value="P:positive regulation of glial cell proliferation"/>
    <property type="evidence" value="ECO:0000315"/>
    <property type="project" value="RGD"/>
</dbReference>
<dbReference type="GO" id="GO:0045944">
    <property type="term" value="P:positive regulation of transcription by RNA polymerase II"/>
    <property type="evidence" value="ECO:0000250"/>
    <property type="project" value="UniProtKB"/>
</dbReference>
<dbReference type="GO" id="GO:0051726">
    <property type="term" value="P:regulation of cell cycle"/>
    <property type="evidence" value="ECO:0000266"/>
    <property type="project" value="RGD"/>
</dbReference>
<dbReference type="GO" id="GO:0006355">
    <property type="term" value="P:regulation of DNA-templated transcription"/>
    <property type="evidence" value="ECO:0000250"/>
    <property type="project" value="UniProtKB"/>
</dbReference>
<dbReference type="GO" id="GO:2000045">
    <property type="term" value="P:regulation of G1/S transition of mitotic cell cycle"/>
    <property type="evidence" value="ECO:0000266"/>
    <property type="project" value="RGD"/>
</dbReference>
<dbReference type="GO" id="GO:0006357">
    <property type="term" value="P:regulation of transcription by RNA polymerase II"/>
    <property type="evidence" value="ECO:0000318"/>
    <property type="project" value="GO_Central"/>
</dbReference>
<dbReference type="GO" id="GO:0032496">
    <property type="term" value="P:response to lipopolysaccharide"/>
    <property type="evidence" value="ECO:0000266"/>
    <property type="project" value="RGD"/>
</dbReference>
<dbReference type="GO" id="GO:0007283">
    <property type="term" value="P:spermatogenesis"/>
    <property type="evidence" value="ECO:0000270"/>
    <property type="project" value="RGD"/>
</dbReference>
<dbReference type="CDD" id="cd14660">
    <property type="entry name" value="E2F_DD"/>
    <property type="match status" value="1"/>
</dbReference>
<dbReference type="FunFam" id="1.10.10.10:FF:000008">
    <property type="entry name" value="E2F transcription factor 1"/>
    <property type="match status" value="1"/>
</dbReference>
<dbReference type="Gene3D" id="6.10.250.540">
    <property type="match status" value="1"/>
</dbReference>
<dbReference type="Gene3D" id="1.10.10.10">
    <property type="entry name" value="Winged helix-like DNA-binding domain superfamily/Winged helix DNA-binding domain"/>
    <property type="match status" value="1"/>
</dbReference>
<dbReference type="InterPro" id="IPR015633">
    <property type="entry name" value="E2F"/>
</dbReference>
<dbReference type="InterPro" id="IPR037241">
    <property type="entry name" value="E2F-DP_heterodim"/>
</dbReference>
<dbReference type="InterPro" id="IPR032198">
    <property type="entry name" value="E2F_CC-MB"/>
</dbReference>
<dbReference type="InterPro" id="IPR003316">
    <property type="entry name" value="E2F_WHTH_DNA-bd_dom"/>
</dbReference>
<dbReference type="InterPro" id="IPR036388">
    <property type="entry name" value="WH-like_DNA-bd_sf"/>
</dbReference>
<dbReference type="InterPro" id="IPR036390">
    <property type="entry name" value="WH_DNA-bd_sf"/>
</dbReference>
<dbReference type="PANTHER" id="PTHR12081">
    <property type="entry name" value="TRANSCRIPTION FACTOR E2F"/>
    <property type="match status" value="1"/>
</dbReference>
<dbReference type="PANTHER" id="PTHR12081:SF43">
    <property type="entry name" value="TRANSCRIPTION FACTOR E2F1"/>
    <property type="match status" value="1"/>
</dbReference>
<dbReference type="Pfam" id="PF16421">
    <property type="entry name" value="E2F_CC-MB"/>
    <property type="match status" value="1"/>
</dbReference>
<dbReference type="Pfam" id="PF02319">
    <property type="entry name" value="E2F_TDP"/>
    <property type="match status" value="1"/>
</dbReference>
<dbReference type="SMART" id="SM01372">
    <property type="entry name" value="E2F_TDP"/>
    <property type="match status" value="1"/>
</dbReference>
<dbReference type="SUPFAM" id="SSF144074">
    <property type="entry name" value="E2F-DP heterodimerization region"/>
    <property type="match status" value="1"/>
</dbReference>
<dbReference type="SUPFAM" id="SSF46785">
    <property type="entry name" value="Winged helix' DNA-binding domain"/>
    <property type="match status" value="1"/>
</dbReference>
<evidence type="ECO:0000250" key="1">
    <source>
        <dbReference type="UniProtKB" id="Q01094"/>
    </source>
</evidence>
<evidence type="ECO:0000250" key="2">
    <source>
        <dbReference type="UniProtKB" id="Q61501"/>
    </source>
</evidence>
<evidence type="ECO:0000255" key="3"/>
<evidence type="ECO:0000256" key="4">
    <source>
        <dbReference type="SAM" id="MobiDB-lite"/>
    </source>
</evidence>
<evidence type="ECO:0000303" key="5">
    <source>
    </source>
</evidence>
<evidence type="ECO:0000305" key="6"/>
<evidence type="ECO:0000312" key="7">
    <source>
        <dbReference type="RGD" id="728892"/>
    </source>
</evidence>
<organism>
    <name type="scientific">Rattus norvegicus</name>
    <name type="common">Rat</name>
    <dbReference type="NCBI Taxonomy" id="10116"/>
    <lineage>
        <taxon>Eukaryota</taxon>
        <taxon>Metazoa</taxon>
        <taxon>Chordata</taxon>
        <taxon>Craniata</taxon>
        <taxon>Vertebrata</taxon>
        <taxon>Euteleostomi</taxon>
        <taxon>Mammalia</taxon>
        <taxon>Eutheria</taxon>
        <taxon>Euarchontoglires</taxon>
        <taxon>Glires</taxon>
        <taxon>Rodentia</taxon>
        <taxon>Myomorpha</taxon>
        <taxon>Muroidea</taxon>
        <taxon>Muridae</taxon>
        <taxon>Murinae</taxon>
        <taxon>Rattus</taxon>
    </lineage>
</organism>
<protein>
    <recommendedName>
        <fullName evidence="5">Transcription factor E2F1</fullName>
        <shortName evidence="5">E2F-1</shortName>
    </recommendedName>
</protein>
<comment type="function">
    <text evidence="1">Transcription activator that binds DNA cooperatively with DP proteins through the E2 recognition site, 5'-TTTC[CG]CGC-3' found in the promoter region of a number of genes whose products are involved in cell cycle regulation or in DNA replication. The DRTF1/E2F complex functions in the control of cell-cycle progression from G1 to S phase. E2F1 binds preferentially RB1 in a cell-cycle dependent manner. It can mediate both cell proliferation and TP53/p53-dependent apoptosis. Blocks adipocyte differentiation by binding to specific promoters repressing CEBPA binding to its target gene promoters. Directly activates transcription of PEG10. Positively regulates transcription of RRP1B.</text>
</comment>
<comment type="activity regulation">
    <text evidence="1">BIRC2/c-IAP1 stimulates its transcriptional activity.</text>
</comment>
<comment type="subunit">
    <text evidence="1 2">Component of the DRTF1/E2F transcription factor complex. Forms heterodimers with DP family members. The E2F1 complex binds specifically hypophosphorylated RB1, the interaction represses E2F1-driven transcription. During the cell cycle, RB1 becomes phosphorylated in mid-to-late G1 phase, detaches from the DRTF1/E2F complex, rendering E2F transcriptionally active. Interacts with TRRAP, which probably mediates its interaction with histone acetyltransferase complexes, leading to transcription activation. Binds TOPBP1 and EAPP. Interacts with ARID3A. Interacts with TRIM28; the interaction inhibits E2F1 acetylation through recruiting HDAC1 and represses its transcriptional activity. Interaction with KAT2B; the interaction acetylates E2F1 enhancing its DNA-binding and transcriptional activity. Interacts with BIRC2/c-IAP1 (via BIR domains). The complex TFDP1:E2F1 interacts with CEBPA; the interaction prevents CEBPA binding to target genes promoters and represses its transcriptional activity. Interacts with RRP1B. Interacts with HCFC1. Interacts with KMT2E; the interaction is probably indirect and is mediated via HCFC1. Interacts with DCAF5 and L3MBTL3; the interaction requires methylation at Lys-183 and is necessary to target E2F1 for ubiquitination by the CRL4-DCAF5 E3 ubiquitin ligase complex (By similarity).</text>
</comment>
<comment type="interaction">
    <interactant intactId="EBI-1211101">
        <id>O09139</id>
    </interactant>
    <interactant intactId="EBI-1162932">
        <id>P33568</id>
        <label>Rb1</label>
    </interactant>
    <organismsDiffer>false</organismsDiffer>
    <experiments>2</experiments>
</comment>
<comment type="subcellular location">
    <subcellularLocation>
        <location evidence="1">Nucleus</location>
    </subcellularLocation>
</comment>
<comment type="PTM">
    <text evidence="1">Phosphorylated by CDK2 and cyclin A-CDK2 in the S-phase. Phosphorylation by CHEK2 stabilizes E2F1 upon DNA damage and regulates its effect on transcription and apoptosis. Phosphorylation at Ser-398 by GSK3B promotes interaction with USP11, leading to its deubiquitination and stabilization.</text>
</comment>
<comment type="PTM">
    <text evidence="1">Ubiquitinated via 'Lys-63'-linked ubiquitin, leading to its degradation. Deubiquitinated by USP11 following phosphorylation by GSK3B, promoting its stability.</text>
</comment>
<comment type="PTM">
    <text evidence="1">Acetylation stimulates DNA-binding. Enhanced under stress conditions such as DNA damage and inhibited by retinoblastoma protein RB1. Regulated by KAP1/TRIM28 which recruits HDAC1 to E2F1 resulting in deacetylation (By similarity).</text>
</comment>
<comment type="PTM">
    <text evidence="1">Methylation at Lys-183 by SETD7 promotes E2F1 ubiquitin-dependent proteasomal degradation.</text>
</comment>
<comment type="similarity">
    <text evidence="6">Belongs to the E2F/DP family.</text>
</comment>
<feature type="chain" id="PRO_0000219463" description="Transcription factor E2F1">
    <location>
        <begin position="1"/>
        <end position="432"/>
    </location>
</feature>
<feature type="DNA-binding region" evidence="3">
    <location>
        <begin position="108"/>
        <end position="192"/>
    </location>
</feature>
<feature type="region of interest" description="Disordered" evidence="4">
    <location>
        <begin position="39"/>
        <end position="85"/>
    </location>
</feature>
<feature type="region of interest" description="Cyclin A:CDK2 binding" evidence="1">
    <location>
        <begin position="65"/>
        <end position="106"/>
    </location>
</feature>
<feature type="region of interest" description="Interaction with BIRC2/c-IAP1" evidence="1">
    <location>
        <begin position="87"/>
        <end position="189"/>
    </location>
</feature>
<feature type="region of interest" description="Disordered" evidence="4">
    <location>
        <begin position="98"/>
        <end position="126"/>
    </location>
</feature>
<feature type="region of interest" description="Leucine-zipper" evidence="1">
    <location>
        <begin position="151"/>
        <end position="172"/>
    </location>
</feature>
<feature type="region of interest" description="Required for interaction with TRIM28" evidence="1">
    <location>
        <begin position="190"/>
        <end position="377"/>
    </location>
</feature>
<feature type="region of interest" description="Dimerization" evidence="3">
    <location>
        <begin position="193"/>
        <end position="282"/>
    </location>
</feature>
<feature type="region of interest" description="Disordered" evidence="4">
    <location>
        <begin position="297"/>
        <end position="342"/>
    </location>
</feature>
<feature type="region of interest" description="Transactivation" evidence="1">
    <location>
        <begin position="363"/>
        <end position="432"/>
    </location>
</feature>
<feature type="region of interest" description="RB1 binding" evidence="1">
    <location>
        <begin position="404"/>
        <end position="421"/>
    </location>
</feature>
<feature type="short sequence motif" description="DEF box" evidence="1">
    <location>
        <begin position="156"/>
        <end position="192"/>
    </location>
</feature>
<feature type="modified residue" description="N6-acetyllysine" evidence="1">
    <location>
        <position position="115"/>
    </location>
</feature>
<feature type="modified residue" description="N6-acetyllysine" evidence="1">
    <location>
        <position position="118"/>
    </location>
</feature>
<feature type="modified residue" description="N6-acetyllysine" evidence="1">
    <location>
        <position position="123"/>
    </location>
</feature>
<feature type="modified residue" description="N6-methyllysine; by SETD7" evidence="1">
    <location>
        <position position="183"/>
    </location>
</feature>
<feature type="modified residue" description="Phosphoserine" evidence="1">
    <location>
        <position position="370"/>
    </location>
</feature>
<feature type="modified residue" description="Phosphoserine" evidence="1">
    <location>
        <position position="398"/>
    </location>
</feature>
<feature type="modified residue" description="Phosphothreonine" evidence="1">
    <location>
        <position position="428"/>
    </location>
</feature>
<gene>
    <name evidence="5 7" type="primary">E2f1</name>
</gene>